<protein>
    <recommendedName>
        <fullName evidence="1">DNA mismatch repair protein MutL</fullName>
    </recommendedName>
</protein>
<organism>
    <name type="scientific">Staphylococcus epidermidis (strain ATCC 35984 / DSM 28319 / BCRC 17069 / CCUG 31568 / BM 3577 / RP62A)</name>
    <dbReference type="NCBI Taxonomy" id="176279"/>
    <lineage>
        <taxon>Bacteria</taxon>
        <taxon>Bacillati</taxon>
        <taxon>Bacillota</taxon>
        <taxon>Bacilli</taxon>
        <taxon>Bacillales</taxon>
        <taxon>Staphylococcaceae</taxon>
        <taxon>Staphylococcus</taxon>
    </lineage>
</organism>
<sequence length="645" mass="73526">MGKIKELETSLANKIAAGEVVERPSSVVKELLENAIDAQATEINIEVEQSGVSSIRVVDNGTGIAQEDLGLVFHRHATSKIVADDDLFHIRTLGFRGEALASISSVAKVTLKTCTDNENGHEIYAENGKIIHQKPAKAKKGTDIQVDSLFYNTPARLKYIKSLYTELGKITDIVNRMAMSHPEIRISLVSDGKKLLSTNGSGRTNEVMAEIYGMKVAKDLVHISGDTSDYHLEGFVAKPEHSRSNKHYISIFINGRYIKNFVLNKAILEGYHTLLTIGRFPICYINIQMDPILVDVNVHPTKLEVRLSKEDQLYDLIVTKIREAFKDKILIPQNDLNHASKKNKVLETFEQQKINFEKQQSQIGETSAPYVHDQKDKNHDVESHKNNLDSTSSTNNESTEVSNELHNHIDDSYLQSQKEVLFDMEQNTSNEYEISNQQSNDIKGTVSQTPHRRVPYMEIVGQVHGTYIIAQNENGMFMIDQHAAQERIKYEYFREKIGEVTNEVQNLLIPLTFHFSKDEQMIIDQYKDELDKVGVHLEHFGGHDYIVNSYPVWFPKEEAEEIIKDMIELVLKHKSVDVKKIREDAAIMMSCKKSIKANHYLKNNEMADLIDQLREAEDPFTCPHGRPIIINFSNYELEKLFKRVM</sequence>
<keyword id="KW-0227">DNA damage</keyword>
<keyword id="KW-0234">DNA repair</keyword>
<keyword id="KW-1185">Reference proteome</keyword>
<name>MUTL_STAEQ</name>
<reference key="1">
    <citation type="journal article" date="2005" name="J. Bacteriol.">
        <title>Insights on evolution of virulence and resistance from the complete genome analysis of an early methicillin-resistant Staphylococcus aureus strain and a biofilm-producing methicillin-resistant Staphylococcus epidermidis strain.</title>
        <authorList>
            <person name="Gill S.R."/>
            <person name="Fouts D.E."/>
            <person name="Archer G.L."/>
            <person name="Mongodin E.F."/>
            <person name="DeBoy R.T."/>
            <person name="Ravel J."/>
            <person name="Paulsen I.T."/>
            <person name="Kolonay J.F."/>
            <person name="Brinkac L.M."/>
            <person name="Beanan M.J."/>
            <person name="Dodson R.J."/>
            <person name="Daugherty S.C."/>
            <person name="Madupu R."/>
            <person name="Angiuoli S.V."/>
            <person name="Durkin A.S."/>
            <person name="Haft D.H."/>
            <person name="Vamathevan J.J."/>
            <person name="Khouri H."/>
            <person name="Utterback T.R."/>
            <person name="Lee C."/>
            <person name="Dimitrov G."/>
            <person name="Jiang L."/>
            <person name="Qin H."/>
            <person name="Weidman J."/>
            <person name="Tran K."/>
            <person name="Kang K.H."/>
            <person name="Hance I.R."/>
            <person name="Nelson K.E."/>
            <person name="Fraser C.M."/>
        </authorList>
    </citation>
    <scope>NUCLEOTIDE SEQUENCE [LARGE SCALE GENOMIC DNA]</scope>
    <source>
        <strain>ATCC 35984 / DSM 28319 / BCRC 17069 / CCUG 31568 / BM 3577 / RP62A</strain>
    </source>
</reference>
<dbReference type="EMBL" id="CP000029">
    <property type="protein sequence ID" value="AAW54255.1"/>
    <property type="molecule type" value="Genomic_DNA"/>
</dbReference>
<dbReference type="RefSeq" id="WP_002439573.1">
    <property type="nucleotide sequence ID" value="NC_002976.3"/>
</dbReference>
<dbReference type="SMR" id="Q5HPP4"/>
<dbReference type="STRING" id="176279.SERP0864"/>
<dbReference type="KEGG" id="ser:SERP0864"/>
<dbReference type="eggNOG" id="COG0323">
    <property type="taxonomic scope" value="Bacteria"/>
</dbReference>
<dbReference type="HOGENOM" id="CLU_004131_4_1_9"/>
<dbReference type="Proteomes" id="UP000000531">
    <property type="component" value="Chromosome"/>
</dbReference>
<dbReference type="GO" id="GO:0032300">
    <property type="term" value="C:mismatch repair complex"/>
    <property type="evidence" value="ECO:0007669"/>
    <property type="project" value="InterPro"/>
</dbReference>
<dbReference type="GO" id="GO:0005524">
    <property type="term" value="F:ATP binding"/>
    <property type="evidence" value="ECO:0007669"/>
    <property type="project" value="InterPro"/>
</dbReference>
<dbReference type="GO" id="GO:0016887">
    <property type="term" value="F:ATP hydrolysis activity"/>
    <property type="evidence" value="ECO:0007669"/>
    <property type="project" value="InterPro"/>
</dbReference>
<dbReference type="GO" id="GO:0140664">
    <property type="term" value="F:ATP-dependent DNA damage sensor activity"/>
    <property type="evidence" value="ECO:0007669"/>
    <property type="project" value="InterPro"/>
</dbReference>
<dbReference type="GO" id="GO:0030983">
    <property type="term" value="F:mismatched DNA binding"/>
    <property type="evidence" value="ECO:0007669"/>
    <property type="project" value="InterPro"/>
</dbReference>
<dbReference type="GO" id="GO:0006298">
    <property type="term" value="P:mismatch repair"/>
    <property type="evidence" value="ECO:0007669"/>
    <property type="project" value="UniProtKB-UniRule"/>
</dbReference>
<dbReference type="CDD" id="cd16926">
    <property type="entry name" value="HATPase_MutL-MLH-PMS-like"/>
    <property type="match status" value="1"/>
</dbReference>
<dbReference type="CDD" id="cd00782">
    <property type="entry name" value="MutL_Trans"/>
    <property type="match status" value="1"/>
</dbReference>
<dbReference type="FunFam" id="3.30.1370.100:FF:000004">
    <property type="entry name" value="DNA mismatch repair endonuclease MutL"/>
    <property type="match status" value="1"/>
</dbReference>
<dbReference type="FunFam" id="3.30.230.10:FF:000036">
    <property type="entry name" value="DNA mismatch repair endonuclease MutL"/>
    <property type="match status" value="1"/>
</dbReference>
<dbReference type="FunFam" id="3.30.565.10:FF:000003">
    <property type="entry name" value="DNA mismatch repair endonuclease MutL"/>
    <property type="match status" value="1"/>
</dbReference>
<dbReference type="Gene3D" id="3.30.230.10">
    <property type="match status" value="1"/>
</dbReference>
<dbReference type="Gene3D" id="3.30.565.10">
    <property type="entry name" value="Histidine kinase-like ATPase, C-terminal domain"/>
    <property type="match status" value="1"/>
</dbReference>
<dbReference type="Gene3D" id="3.30.1540.20">
    <property type="entry name" value="MutL, C-terminal domain, dimerisation subdomain"/>
    <property type="match status" value="1"/>
</dbReference>
<dbReference type="Gene3D" id="3.30.1370.100">
    <property type="entry name" value="MutL, C-terminal domain, regulatory subdomain"/>
    <property type="match status" value="1"/>
</dbReference>
<dbReference type="HAMAP" id="MF_00149">
    <property type="entry name" value="DNA_mis_repair"/>
    <property type="match status" value="1"/>
</dbReference>
<dbReference type="InterPro" id="IPR014762">
    <property type="entry name" value="DNA_mismatch_repair_CS"/>
</dbReference>
<dbReference type="InterPro" id="IPR020667">
    <property type="entry name" value="DNA_mismatch_repair_MutL"/>
</dbReference>
<dbReference type="InterPro" id="IPR013507">
    <property type="entry name" value="DNA_mismatch_S5_2-like"/>
</dbReference>
<dbReference type="InterPro" id="IPR036890">
    <property type="entry name" value="HATPase_C_sf"/>
</dbReference>
<dbReference type="InterPro" id="IPR002099">
    <property type="entry name" value="MutL/Mlh/PMS"/>
</dbReference>
<dbReference type="InterPro" id="IPR038973">
    <property type="entry name" value="MutL/Mlh/Pms-like"/>
</dbReference>
<dbReference type="InterPro" id="IPR014790">
    <property type="entry name" value="MutL_C"/>
</dbReference>
<dbReference type="InterPro" id="IPR042120">
    <property type="entry name" value="MutL_C_dimsub"/>
</dbReference>
<dbReference type="InterPro" id="IPR042121">
    <property type="entry name" value="MutL_C_regsub"/>
</dbReference>
<dbReference type="InterPro" id="IPR037198">
    <property type="entry name" value="MutL_C_sf"/>
</dbReference>
<dbReference type="InterPro" id="IPR020568">
    <property type="entry name" value="Ribosomal_Su5_D2-typ_SF"/>
</dbReference>
<dbReference type="InterPro" id="IPR014721">
    <property type="entry name" value="Ribsml_uS5_D2-typ_fold_subgr"/>
</dbReference>
<dbReference type="NCBIfam" id="TIGR00585">
    <property type="entry name" value="mutl"/>
    <property type="match status" value="1"/>
</dbReference>
<dbReference type="NCBIfam" id="NF000950">
    <property type="entry name" value="PRK00095.1-3"/>
    <property type="match status" value="1"/>
</dbReference>
<dbReference type="PANTHER" id="PTHR10073">
    <property type="entry name" value="DNA MISMATCH REPAIR PROTEIN MLH, PMS, MUTL"/>
    <property type="match status" value="1"/>
</dbReference>
<dbReference type="PANTHER" id="PTHR10073:SF12">
    <property type="entry name" value="DNA MISMATCH REPAIR PROTEIN MLH1"/>
    <property type="match status" value="1"/>
</dbReference>
<dbReference type="Pfam" id="PF01119">
    <property type="entry name" value="DNA_mis_repair"/>
    <property type="match status" value="1"/>
</dbReference>
<dbReference type="Pfam" id="PF13589">
    <property type="entry name" value="HATPase_c_3"/>
    <property type="match status" value="1"/>
</dbReference>
<dbReference type="Pfam" id="PF08676">
    <property type="entry name" value="MutL_C"/>
    <property type="match status" value="1"/>
</dbReference>
<dbReference type="SMART" id="SM01340">
    <property type="entry name" value="DNA_mis_repair"/>
    <property type="match status" value="1"/>
</dbReference>
<dbReference type="SMART" id="SM00853">
    <property type="entry name" value="MutL_C"/>
    <property type="match status" value="1"/>
</dbReference>
<dbReference type="SUPFAM" id="SSF55874">
    <property type="entry name" value="ATPase domain of HSP90 chaperone/DNA topoisomerase II/histidine kinase"/>
    <property type="match status" value="1"/>
</dbReference>
<dbReference type="SUPFAM" id="SSF118116">
    <property type="entry name" value="DNA mismatch repair protein MutL"/>
    <property type="match status" value="1"/>
</dbReference>
<dbReference type="SUPFAM" id="SSF54211">
    <property type="entry name" value="Ribosomal protein S5 domain 2-like"/>
    <property type="match status" value="1"/>
</dbReference>
<dbReference type="PROSITE" id="PS00058">
    <property type="entry name" value="DNA_MISMATCH_REPAIR_1"/>
    <property type="match status" value="1"/>
</dbReference>
<accession>Q5HPP4</accession>
<comment type="function">
    <text evidence="1">This protein is involved in the repair of mismatches in DNA. It is required for dam-dependent methyl-directed DNA mismatch repair. May act as a 'molecular matchmaker', a protein that promotes the formation of a stable complex between two or more DNA-binding proteins in an ATP-dependent manner without itself being part of a final effector complex.</text>
</comment>
<comment type="similarity">
    <text evidence="1">Belongs to the DNA mismatch repair MutL/HexB family.</text>
</comment>
<evidence type="ECO:0000255" key="1">
    <source>
        <dbReference type="HAMAP-Rule" id="MF_00149"/>
    </source>
</evidence>
<evidence type="ECO:0000256" key="2">
    <source>
        <dbReference type="SAM" id="MobiDB-lite"/>
    </source>
</evidence>
<proteinExistence type="inferred from homology"/>
<feature type="chain" id="PRO_0000177976" description="DNA mismatch repair protein MutL">
    <location>
        <begin position="1"/>
        <end position="645"/>
    </location>
</feature>
<feature type="region of interest" description="Disordered" evidence="2">
    <location>
        <begin position="371"/>
        <end position="403"/>
    </location>
</feature>
<feature type="compositionally biased region" description="Basic and acidic residues" evidence="2">
    <location>
        <begin position="372"/>
        <end position="387"/>
    </location>
</feature>
<feature type="compositionally biased region" description="Low complexity" evidence="2">
    <location>
        <begin position="390"/>
        <end position="402"/>
    </location>
</feature>
<gene>
    <name evidence="1" type="primary">mutL</name>
    <name type="ordered locus">SERP0864</name>
</gene>